<protein>
    <recommendedName>
        <fullName evidence="1">Ribonuclease HII</fullName>
        <shortName evidence="1">RNase HII</shortName>
        <ecNumber evidence="1">3.1.26.4</ecNumber>
    </recommendedName>
</protein>
<dbReference type="EC" id="3.1.26.4" evidence="1"/>
<dbReference type="EMBL" id="CP000083">
    <property type="protein sequence ID" value="AAZ25408.1"/>
    <property type="molecule type" value="Genomic_DNA"/>
</dbReference>
<dbReference type="RefSeq" id="WP_011042405.1">
    <property type="nucleotide sequence ID" value="NC_003910.7"/>
</dbReference>
<dbReference type="SMR" id="Q485F4"/>
<dbReference type="STRING" id="167879.CPS_1569"/>
<dbReference type="KEGG" id="cps:CPS_1569"/>
<dbReference type="eggNOG" id="COG0164">
    <property type="taxonomic scope" value="Bacteria"/>
</dbReference>
<dbReference type="HOGENOM" id="CLU_036532_3_2_6"/>
<dbReference type="Proteomes" id="UP000000547">
    <property type="component" value="Chromosome"/>
</dbReference>
<dbReference type="GO" id="GO:0005737">
    <property type="term" value="C:cytoplasm"/>
    <property type="evidence" value="ECO:0007669"/>
    <property type="project" value="UniProtKB-SubCell"/>
</dbReference>
<dbReference type="GO" id="GO:0032299">
    <property type="term" value="C:ribonuclease H2 complex"/>
    <property type="evidence" value="ECO:0007669"/>
    <property type="project" value="TreeGrafter"/>
</dbReference>
<dbReference type="GO" id="GO:0030145">
    <property type="term" value="F:manganese ion binding"/>
    <property type="evidence" value="ECO:0007669"/>
    <property type="project" value="UniProtKB-UniRule"/>
</dbReference>
<dbReference type="GO" id="GO:0003723">
    <property type="term" value="F:RNA binding"/>
    <property type="evidence" value="ECO:0007669"/>
    <property type="project" value="InterPro"/>
</dbReference>
<dbReference type="GO" id="GO:0004523">
    <property type="term" value="F:RNA-DNA hybrid ribonuclease activity"/>
    <property type="evidence" value="ECO:0007669"/>
    <property type="project" value="UniProtKB-UniRule"/>
</dbReference>
<dbReference type="GO" id="GO:0043137">
    <property type="term" value="P:DNA replication, removal of RNA primer"/>
    <property type="evidence" value="ECO:0007669"/>
    <property type="project" value="TreeGrafter"/>
</dbReference>
<dbReference type="GO" id="GO:0006298">
    <property type="term" value="P:mismatch repair"/>
    <property type="evidence" value="ECO:0007669"/>
    <property type="project" value="TreeGrafter"/>
</dbReference>
<dbReference type="CDD" id="cd07182">
    <property type="entry name" value="RNase_HII_bacteria_HII_like"/>
    <property type="match status" value="1"/>
</dbReference>
<dbReference type="FunFam" id="3.30.420.10:FF:000006">
    <property type="entry name" value="Ribonuclease HII"/>
    <property type="match status" value="1"/>
</dbReference>
<dbReference type="Gene3D" id="3.30.420.10">
    <property type="entry name" value="Ribonuclease H-like superfamily/Ribonuclease H"/>
    <property type="match status" value="1"/>
</dbReference>
<dbReference type="HAMAP" id="MF_00052_B">
    <property type="entry name" value="RNase_HII_B"/>
    <property type="match status" value="1"/>
</dbReference>
<dbReference type="InterPro" id="IPR022898">
    <property type="entry name" value="RNase_HII"/>
</dbReference>
<dbReference type="InterPro" id="IPR001352">
    <property type="entry name" value="RNase_HII/HIII"/>
</dbReference>
<dbReference type="InterPro" id="IPR024567">
    <property type="entry name" value="RNase_HII/HIII_dom"/>
</dbReference>
<dbReference type="InterPro" id="IPR012337">
    <property type="entry name" value="RNaseH-like_sf"/>
</dbReference>
<dbReference type="InterPro" id="IPR036397">
    <property type="entry name" value="RNaseH_sf"/>
</dbReference>
<dbReference type="NCBIfam" id="NF000595">
    <property type="entry name" value="PRK00015.1-3"/>
    <property type="match status" value="1"/>
</dbReference>
<dbReference type="NCBIfam" id="NF000596">
    <property type="entry name" value="PRK00015.1-4"/>
    <property type="match status" value="1"/>
</dbReference>
<dbReference type="PANTHER" id="PTHR10954">
    <property type="entry name" value="RIBONUCLEASE H2 SUBUNIT A"/>
    <property type="match status" value="1"/>
</dbReference>
<dbReference type="PANTHER" id="PTHR10954:SF18">
    <property type="entry name" value="RIBONUCLEASE HII"/>
    <property type="match status" value="1"/>
</dbReference>
<dbReference type="Pfam" id="PF01351">
    <property type="entry name" value="RNase_HII"/>
    <property type="match status" value="1"/>
</dbReference>
<dbReference type="SUPFAM" id="SSF53098">
    <property type="entry name" value="Ribonuclease H-like"/>
    <property type="match status" value="1"/>
</dbReference>
<dbReference type="PROSITE" id="PS51975">
    <property type="entry name" value="RNASE_H_2"/>
    <property type="match status" value="1"/>
</dbReference>
<evidence type="ECO:0000255" key="1">
    <source>
        <dbReference type="HAMAP-Rule" id="MF_00052"/>
    </source>
</evidence>
<evidence type="ECO:0000255" key="2">
    <source>
        <dbReference type="PROSITE-ProRule" id="PRU01319"/>
    </source>
</evidence>
<name>RNH2_COLP3</name>
<sequence length="217" mass="23901">MASKQIFPDFEYPIAYCIAGVDEVGRGPLVGDVVTAAVILDPDNPIEGLMDSKKLSEKKRNLLSLEIKEKAISWSLGRASPQEIDTLNILHATMLAMQRAVEGLNVEPDFVLVDGNRCPTFLCNASESNQQNLKIASQAVVKGDARVTEISAASIIAKVARDNEMIALDKLHPEYGFAKHKGYPTKLHLEKIIEHGVLDCYRQSFKPVARVLGTYHD</sequence>
<accession>Q485F4</accession>
<proteinExistence type="inferred from homology"/>
<keyword id="KW-0963">Cytoplasm</keyword>
<keyword id="KW-0255">Endonuclease</keyword>
<keyword id="KW-0378">Hydrolase</keyword>
<keyword id="KW-0464">Manganese</keyword>
<keyword id="KW-0479">Metal-binding</keyword>
<keyword id="KW-0540">Nuclease</keyword>
<reference key="1">
    <citation type="journal article" date="2005" name="Proc. Natl. Acad. Sci. U.S.A.">
        <title>The psychrophilic lifestyle as revealed by the genome sequence of Colwellia psychrerythraea 34H through genomic and proteomic analyses.</title>
        <authorList>
            <person name="Methe B.A."/>
            <person name="Nelson K.E."/>
            <person name="Deming J.W."/>
            <person name="Momen B."/>
            <person name="Melamud E."/>
            <person name="Zhang X."/>
            <person name="Moult J."/>
            <person name="Madupu R."/>
            <person name="Nelson W.C."/>
            <person name="Dodson R.J."/>
            <person name="Brinkac L.M."/>
            <person name="Daugherty S.C."/>
            <person name="Durkin A.S."/>
            <person name="DeBoy R.T."/>
            <person name="Kolonay J.F."/>
            <person name="Sullivan S.A."/>
            <person name="Zhou L."/>
            <person name="Davidsen T.M."/>
            <person name="Wu M."/>
            <person name="Huston A.L."/>
            <person name="Lewis M."/>
            <person name="Weaver B."/>
            <person name="Weidman J.F."/>
            <person name="Khouri H."/>
            <person name="Utterback T.R."/>
            <person name="Feldblyum T.V."/>
            <person name="Fraser C.M."/>
        </authorList>
    </citation>
    <scope>NUCLEOTIDE SEQUENCE [LARGE SCALE GENOMIC DNA]</scope>
    <source>
        <strain>34H / ATCC BAA-681</strain>
    </source>
</reference>
<comment type="function">
    <text evidence="1">Endonuclease that specifically degrades the RNA of RNA-DNA hybrids.</text>
</comment>
<comment type="catalytic activity">
    <reaction evidence="1">
        <text>Endonucleolytic cleavage to 5'-phosphomonoester.</text>
        <dbReference type="EC" id="3.1.26.4"/>
    </reaction>
</comment>
<comment type="cofactor">
    <cofactor evidence="1">
        <name>Mn(2+)</name>
        <dbReference type="ChEBI" id="CHEBI:29035"/>
    </cofactor>
    <cofactor evidence="1">
        <name>Mg(2+)</name>
        <dbReference type="ChEBI" id="CHEBI:18420"/>
    </cofactor>
    <text evidence="1">Manganese or magnesium. Binds 1 divalent metal ion per monomer in the absence of substrate. May bind a second metal ion after substrate binding.</text>
</comment>
<comment type="subcellular location">
    <subcellularLocation>
        <location evidence="1">Cytoplasm</location>
    </subcellularLocation>
</comment>
<comment type="similarity">
    <text evidence="1">Belongs to the RNase HII family.</text>
</comment>
<feature type="chain" id="PRO_0000235713" description="Ribonuclease HII">
    <location>
        <begin position="1"/>
        <end position="217"/>
    </location>
</feature>
<feature type="domain" description="RNase H type-2" evidence="2">
    <location>
        <begin position="16"/>
        <end position="217"/>
    </location>
</feature>
<feature type="binding site" evidence="1">
    <location>
        <position position="22"/>
    </location>
    <ligand>
        <name>a divalent metal cation</name>
        <dbReference type="ChEBI" id="CHEBI:60240"/>
    </ligand>
</feature>
<feature type="binding site" evidence="1">
    <location>
        <position position="23"/>
    </location>
    <ligand>
        <name>a divalent metal cation</name>
        <dbReference type="ChEBI" id="CHEBI:60240"/>
    </ligand>
</feature>
<feature type="binding site" evidence="1">
    <location>
        <position position="114"/>
    </location>
    <ligand>
        <name>a divalent metal cation</name>
        <dbReference type="ChEBI" id="CHEBI:60240"/>
    </ligand>
</feature>
<organism>
    <name type="scientific">Colwellia psychrerythraea (strain 34H / ATCC BAA-681)</name>
    <name type="common">Vibrio psychroerythus</name>
    <dbReference type="NCBI Taxonomy" id="167879"/>
    <lineage>
        <taxon>Bacteria</taxon>
        <taxon>Pseudomonadati</taxon>
        <taxon>Pseudomonadota</taxon>
        <taxon>Gammaproteobacteria</taxon>
        <taxon>Alteromonadales</taxon>
        <taxon>Colwelliaceae</taxon>
        <taxon>Colwellia</taxon>
    </lineage>
</organism>
<gene>
    <name evidence="1" type="primary">rnhB</name>
    <name type="ordered locus">CPS_1569</name>
</gene>